<comment type="function">
    <text evidence="1">Presumably involved in the processing and regular turnover of intracellular proteins. Catalyzes the removal of unsubstituted N-terminal amino acids from various peptides.</text>
</comment>
<comment type="catalytic activity">
    <reaction evidence="1">
        <text>Release of an N-terminal amino acid, Xaa-|-Yaa-, in which Xaa is preferably Leu, but may be other amino acids including Pro although not Arg or Lys, and Yaa may be Pro. Amino acid amides and methyl esters are also readily hydrolyzed, but rates on arylamides are exceedingly low.</text>
        <dbReference type="EC" id="3.4.11.1"/>
    </reaction>
</comment>
<comment type="catalytic activity">
    <reaction evidence="1">
        <text>Release of an N-terminal amino acid, preferentially leucine, but not glutamic or aspartic acids.</text>
        <dbReference type="EC" id="3.4.11.10"/>
    </reaction>
</comment>
<comment type="cofactor">
    <cofactor evidence="1">
        <name>Mn(2+)</name>
        <dbReference type="ChEBI" id="CHEBI:29035"/>
    </cofactor>
    <text evidence="1">Binds 2 manganese ions per subunit.</text>
</comment>
<comment type="subcellular location">
    <subcellularLocation>
        <location evidence="1">Cytoplasm</location>
    </subcellularLocation>
</comment>
<comment type="similarity">
    <text evidence="1">Belongs to the peptidase M17 family.</text>
</comment>
<feature type="chain" id="PRO_0000165785" description="Probable cytosol aminopeptidase">
    <location>
        <begin position="1"/>
        <end position="496"/>
    </location>
</feature>
<feature type="active site" evidence="1">
    <location>
        <position position="278"/>
    </location>
</feature>
<feature type="active site" evidence="1">
    <location>
        <position position="352"/>
    </location>
</feature>
<feature type="binding site" evidence="1">
    <location>
        <position position="266"/>
    </location>
    <ligand>
        <name>Mn(2+)</name>
        <dbReference type="ChEBI" id="CHEBI:29035"/>
        <label>2</label>
    </ligand>
</feature>
<feature type="binding site" evidence="1">
    <location>
        <position position="271"/>
    </location>
    <ligand>
        <name>Mn(2+)</name>
        <dbReference type="ChEBI" id="CHEBI:29035"/>
        <label>1</label>
    </ligand>
</feature>
<feature type="binding site" evidence="1">
    <location>
        <position position="271"/>
    </location>
    <ligand>
        <name>Mn(2+)</name>
        <dbReference type="ChEBI" id="CHEBI:29035"/>
        <label>2</label>
    </ligand>
</feature>
<feature type="binding site" evidence="1">
    <location>
        <position position="289"/>
    </location>
    <ligand>
        <name>Mn(2+)</name>
        <dbReference type="ChEBI" id="CHEBI:29035"/>
        <label>2</label>
    </ligand>
</feature>
<feature type="binding site" evidence="1">
    <location>
        <position position="348"/>
    </location>
    <ligand>
        <name>Mn(2+)</name>
        <dbReference type="ChEBI" id="CHEBI:29035"/>
        <label>1</label>
    </ligand>
</feature>
<feature type="binding site" evidence="1">
    <location>
        <position position="350"/>
    </location>
    <ligand>
        <name>Mn(2+)</name>
        <dbReference type="ChEBI" id="CHEBI:29035"/>
        <label>1</label>
    </ligand>
</feature>
<feature type="binding site" evidence="1">
    <location>
        <position position="350"/>
    </location>
    <ligand>
        <name>Mn(2+)</name>
        <dbReference type="ChEBI" id="CHEBI:29035"/>
        <label>2</label>
    </ligand>
</feature>
<gene>
    <name evidence="1" type="primary">pepA</name>
    <name type="ordered locus">PSPTO_1271</name>
</gene>
<organism>
    <name type="scientific">Pseudomonas syringae pv. tomato (strain ATCC BAA-871 / DC3000)</name>
    <dbReference type="NCBI Taxonomy" id="223283"/>
    <lineage>
        <taxon>Bacteria</taxon>
        <taxon>Pseudomonadati</taxon>
        <taxon>Pseudomonadota</taxon>
        <taxon>Gammaproteobacteria</taxon>
        <taxon>Pseudomonadales</taxon>
        <taxon>Pseudomonadaceae</taxon>
        <taxon>Pseudomonas</taxon>
    </lineage>
</organism>
<keyword id="KW-0031">Aminopeptidase</keyword>
<keyword id="KW-0963">Cytoplasm</keyword>
<keyword id="KW-0378">Hydrolase</keyword>
<keyword id="KW-0464">Manganese</keyword>
<keyword id="KW-0479">Metal-binding</keyword>
<keyword id="KW-0645">Protease</keyword>
<keyword id="KW-1185">Reference proteome</keyword>
<accession>Q887M0</accession>
<proteinExistence type="inferred from homology"/>
<protein>
    <recommendedName>
        <fullName evidence="1">Probable cytosol aminopeptidase</fullName>
        <ecNumber evidence="1">3.4.11.1</ecNumber>
    </recommendedName>
    <alternativeName>
        <fullName evidence="1">Leucine aminopeptidase</fullName>
        <shortName evidence="1">LAP</shortName>
        <ecNumber evidence="1">3.4.11.10</ecNumber>
    </alternativeName>
    <alternativeName>
        <fullName evidence="1">Leucyl aminopeptidase</fullName>
    </alternativeName>
</protein>
<reference key="1">
    <citation type="journal article" date="2003" name="Proc. Natl. Acad. Sci. U.S.A.">
        <title>The complete genome sequence of the Arabidopsis and tomato pathogen Pseudomonas syringae pv. tomato DC3000.</title>
        <authorList>
            <person name="Buell C.R."/>
            <person name="Joardar V."/>
            <person name="Lindeberg M."/>
            <person name="Selengut J."/>
            <person name="Paulsen I.T."/>
            <person name="Gwinn M.L."/>
            <person name="Dodson R.J."/>
            <person name="DeBoy R.T."/>
            <person name="Durkin A.S."/>
            <person name="Kolonay J.F."/>
            <person name="Madupu R."/>
            <person name="Daugherty S.C."/>
            <person name="Brinkac L.M."/>
            <person name="Beanan M.J."/>
            <person name="Haft D.H."/>
            <person name="Nelson W.C."/>
            <person name="Davidsen T.M."/>
            <person name="Zafar N."/>
            <person name="Zhou L."/>
            <person name="Liu J."/>
            <person name="Yuan Q."/>
            <person name="Khouri H.M."/>
            <person name="Fedorova N.B."/>
            <person name="Tran B."/>
            <person name="Russell D."/>
            <person name="Berry K.J."/>
            <person name="Utterback T.R."/>
            <person name="Van Aken S.E."/>
            <person name="Feldblyum T.V."/>
            <person name="D'Ascenzo M."/>
            <person name="Deng W.-L."/>
            <person name="Ramos A.R."/>
            <person name="Alfano J.R."/>
            <person name="Cartinhour S."/>
            <person name="Chatterjee A.K."/>
            <person name="Delaney T.P."/>
            <person name="Lazarowitz S.G."/>
            <person name="Martin G.B."/>
            <person name="Schneider D.J."/>
            <person name="Tang X."/>
            <person name="Bender C.L."/>
            <person name="White O."/>
            <person name="Fraser C.M."/>
            <person name="Collmer A."/>
        </authorList>
    </citation>
    <scope>NUCLEOTIDE SEQUENCE [LARGE SCALE GENOMIC DNA]</scope>
    <source>
        <strain>ATCC BAA-871 / DC3000</strain>
    </source>
</reference>
<name>AMPA_PSESM</name>
<dbReference type="EC" id="3.4.11.1" evidence="1"/>
<dbReference type="EC" id="3.4.11.10" evidence="1"/>
<dbReference type="EMBL" id="AE016853">
    <property type="protein sequence ID" value="AAO54796.1"/>
    <property type="molecule type" value="Genomic_DNA"/>
</dbReference>
<dbReference type="RefSeq" id="NP_791101.1">
    <property type="nucleotide sequence ID" value="NC_004578.1"/>
</dbReference>
<dbReference type="RefSeq" id="WP_011103494.1">
    <property type="nucleotide sequence ID" value="NC_004578.1"/>
</dbReference>
<dbReference type="SMR" id="Q887M0"/>
<dbReference type="STRING" id="223283.PSPTO_1271"/>
<dbReference type="MEROPS" id="M17.003"/>
<dbReference type="GeneID" id="1182907"/>
<dbReference type="KEGG" id="pst:PSPTO_1271"/>
<dbReference type="PATRIC" id="fig|223283.9.peg.1293"/>
<dbReference type="eggNOG" id="COG0260">
    <property type="taxonomic scope" value="Bacteria"/>
</dbReference>
<dbReference type="HOGENOM" id="CLU_013734_2_2_6"/>
<dbReference type="OrthoDB" id="9809354at2"/>
<dbReference type="PhylomeDB" id="Q887M0"/>
<dbReference type="Proteomes" id="UP000002515">
    <property type="component" value="Chromosome"/>
</dbReference>
<dbReference type="GO" id="GO:0005737">
    <property type="term" value="C:cytoplasm"/>
    <property type="evidence" value="ECO:0007669"/>
    <property type="project" value="UniProtKB-SubCell"/>
</dbReference>
<dbReference type="GO" id="GO:0030145">
    <property type="term" value="F:manganese ion binding"/>
    <property type="evidence" value="ECO:0007669"/>
    <property type="project" value="UniProtKB-UniRule"/>
</dbReference>
<dbReference type="GO" id="GO:0070006">
    <property type="term" value="F:metalloaminopeptidase activity"/>
    <property type="evidence" value="ECO:0007669"/>
    <property type="project" value="InterPro"/>
</dbReference>
<dbReference type="GO" id="GO:0006508">
    <property type="term" value="P:proteolysis"/>
    <property type="evidence" value="ECO:0007669"/>
    <property type="project" value="UniProtKB-KW"/>
</dbReference>
<dbReference type="CDD" id="cd00433">
    <property type="entry name" value="Peptidase_M17"/>
    <property type="match status" value="1"/>
</dbReference>
<dbReference type="FunFam" id="3.40.220.10:FF:000001">
    <property type="entry name" value="Probable cytosol aminopeptidase"/>
    <property type="match status" value="1"/>
</dbReference>
<dbReference type="FunFam" id="3.40.630.10:FF:000004">
    <property type="entry name" value="Probable cytosol aminopeptidase"/>
    <property type="match status" value="1"/>
</dbReference>
<dbReference type="Gene3D" id="3.40.220.10">
    <property type="entry name" value="Leucine Aminopeptidase, subunit E, domain 1"/>
    <property type="match status" value="1"/>
</dbReference>
<dbReference type="Gene3D" id="3.40.630.10">
    <property type="entry name" value="Zn peptidases"/>
    <property type="match status" value="1"/>
</dbReference>
<dbReference type="HAMAP" id="MF_00181">
    <property type="entry name" value="Cytosol_peptidase_M17"/>
    <property type="match status" value="1"/>
</dbReference>
<dbReference type="InterPro" id="IPR011356">
    <property type="entry name" value="Leucine_aapep/pepB"/>
</dbReference>
<dbReference type="InterPro" id="IPR043472">
    <property type="entry name" value="Macro_dom-like"/>
</dbReference>
<dbReference type="InterPro" id="IPR000819">
    <property type="entry name" value="Peptidase_M17_C"/>
</dbReference>
<dbReference type="InterPro" id="IPR023042">
    <property type="entry name" value="Peptidase_M17_leu_NH2_pept"/>
</dbReference>
<dbReference type="InterPro" id="IPR008283">
    <property type="entry name" value="Peptidase_M17_N"/>
</dbReference>
<dbReference type="NCBIfam" id="NF002073">
    <property type="entry name" value="PRK00913.1-2"/>
    <property type="match status" value="1"/>
</dbReference>
<dbReference type="NCBIfam" id="NF002074">
    <property type="entry name" value="PRK00913.1-4"/>
    <property type="match status" value="1"/>
</dbReference>
<dbReference type="NCBIfam" id="NF002077">
    <property type="entry name" value="PRK00913.2-4"/>
    <property type="match status" value="1"/>
</dbReference>
<dbReference type="NCBIfam" id="NF002083">
    <property type="entry name" value="PRK00913.3-5"/>
    <property type="match status" value="1"/>
</dbReference>
<dbReference type="PANTHER" id="PTHR11963:SF23">
    <property type="entry name" value="CYTOSOL AMINOPEPTIDASE"/>
    <property type="match status" value="1"/>
</dbReference>
<dbReference type="PANTHER" id="PTHR11963">
    <property type="entry name" value="LEUCINE AMINOPEPTIDASE-RELATED"/>
    <property type="match status" value="1"/>
</dbReference>
<dbReference type="Pfam" id="PF00883">
    <property type="entry name" value="Peptidase_M17"/>
    <property type="match status" value="1"/>
</dbReference>
<dbReference type="Pfam" id="PF02789">
    <property type="entry name" value="Peptidase_M17_N"/>
    <property type="match status" value="1"/>
</dbReference>
<dbReference type="PRINTS" id="PR00481">
    <property type="entry name" value="LAMNOPPTDASE"/>
</dbReference>
<dbReference type="SUPFAM" id="SSF52949">
    <property type="entry name" value="Macro domain-like"/>
    <property type="match status" value="1"/>
</dbReference>
<dbReference type="SUPFAM" id="SSF53187">
    <property type="entry name" value="Zn-dependent exopeptidases"/>
    <property type="match status" value="1"/>
</dbReference>
<dbReference type="PROSITE" id="PS00631">
    <property type="entry name" value="CYTOSOL_AP"/>
    <property type="match status" value="1"/>
</dbReference>
<sequence length="496" mass="52389">MELVVKSVSPETLKTATLVVTINESRVLIGAAQLVDIKSGGAISAVLERGDLAGKSGQTLLLTNLQNIKAERVLLVGIGKDGELSDRQLKKIAGSVLSSLKGLGGSDAVIALDDLSVKNRDTYGKARLFVEALADGEYVFDRFKTQKAEVRPLKKITLLTDKVSVADVERAANHAQAIATGMALTRDLGNLPPNICHPTYLGEEAKALGKAHKNLKVEIHDEKKLAELGMGSFLAVAQGSAQPPRLIVMNYQGGKKGDKPFVLVGKGITFDTGGISIKPAAGMDEMKFDMCGAASVFGTLRAVLELKLPINVVCILACAENMPSGTATRPGDIVTTMSGQTVEILNTDAEGRLVLCDALTYAERFKPQAVIDIATLTGACVVALGGHTSGLLGNNDALINQLLDAGKLADDRAWQLPLFDEYQEQLDSPFADIANIGGPKGGTITAACFLSRFTKAYEWAHLDIAGTAWLSGGKDKGATGRPVPLLTQYLLDRAGV</sequence>
<evidence type="ECO:0000255" key="1">
    <source>
        <dbReference type="HAMAP-Rule" id="MF_00181"/>
    </source>
</evidence>